<sequence length="89" mass="10332">MALLDFFLSRKKPTANIAKERLQIIVAERRRGDSEPHYLPDLKRDILAVICKYIQIDPEMLHVQFEQKGDDISVLELNVTLPETEETPK</sequence>
<evidence type="ECO:0000255" key="1">
    <source>
        <dbReference type="HAMAP-Rule" id="MF_00262"/>
    </source>
</evidence>
<name>MINE_YERPG</name>
<organism>
    <name type="scientific">Yersinia pestis bv. Antiqua (strain Angola)</name>
    <dbReference type="NCBI Taxonomy" id="349746"/>
    <lineage>
        <taxon>Bacteria</taxon>
        <taxon>Pseudomonadati</taxon>
        <taxon>Pseudomonadota</taxon>
        <taxon>Gammaproteobacteria</taxon>
        <taxon>Enterobacterales</taxon>
        <taxon>Yersiniaceae</taxon>
        <taxon>Yersinia</taxon>
    </lineage>
</organism>
<comment type="function">
    <text evidence="1">Prevents the cell division inhibition by proteins MinC and MinD at internal division sites while permitting inhibition at polar sites. This ensures cell division at the proper site by restricting the formation of a division septum at the midpoint of the long axis of the cell.</text>
</comment>
<comment type="similarity">
    <text evidence="1">Belongs to the MinE family.</text>
</comment>
<proteinExistence type="inferred from homology"/>
<feature type="chain" id="PRO_1000114257" description="Cell division topological specificity factor">
    <location>
        <begin position="1"/>
        <end position="89"/>
    </location>
</feature>
<keyword id="KW-0131">Cell cycle</keyword>
<keyword id="KW-0132">Cell division</keyword>
<dbReference type="EMBL" id="CP000901">
    <property type="protein sequence ID" value="ABX85677.1"/>
    <property type="molecule type" value="Genomic_DNA"/>
</dbReference>
<dbReference type="RefSeq" id="WP_002211180.1">
    <property type="nucleotide sequence ID" value="NZ_CP009935.1"/>
</dbReference>
<dbReference type="SMR" id="A9QYV4"/>
<dbReference type="GeneID" id="97456410"/>
<dbReference type="KEGG" id="ypg:YpAngola_A2401"/>
<dbReference type="PATRIC" id="fig|349746.12.peg.3417"/>
<dbReference type="GO" id="GO:0051301">
    <property type="term" value="P:cell division"/>
    <property type="evidence" value="ECO:0007669"/>
    <property type="project" value="UniProtKB-KW"/>
</dbReference>
<dbReference type="GO" id="GO:0032955">
    <property type="term" value="P:regulation of division septum assembly"/>
    <property type="evidence" value="ECO:0007669"/>
    <property type="project" value="InterPro"/>
</dbReference>
<dbReference type="FunFam" id="3.30.1070.10:FF:000001">
    <property type="entry name" value="Cell division topological specificity factor"/>
    <property type="match status" value="1"/>
</dbReference>
<dbReference type="Gene3D" id="3.30.1070.10">
    <property type="entry name" value="Cell division topological specificity factor MinE"/>
    <property type="match status" value="1"/>
</dbReference>
<dbReference type="HAMAP" id="MF_00262">
    <property type="entry name" value="MinE"/>
    <property type="match status" value="1"/>
</dbReference>
<dbReference type="InterPro" id="IPR005527">
    <property type="entry name" value="MinE"/>
</dbReference>
<dbReference type="InterPro" id="IPR036707">
    <property type="entry name" value="MinE_sf"/>
</dbReference>
<dbReference type="NCBIfam" id="TIGR01215">
    <property type="entry name" value="minE"/>
    <property type="match status" value="1"/>
</dbReference>
<dbReference type="NCBIfam" id="NF001422">
    <property type="entry name" value="PRK00296.1"/>
    <property type="match status" value="1"/>
</dbReference>
<dbReference type="Pfam" id="PF03776">
    <property type="entry name" value="MinE"/>
    <property type="match status" value="1"/>
</dbReference>
<dbReference type="SUPFAM" id="SSF55229">
    <property type="entry name" value="Cell division protein MinE topological specificity domain"/>
    <property type="match status" value="1"/>
</dbReference>
<protein>
    <recommendedName>
        <fullName evidence="1">Cell division topological specificity factor</fullName>
    </recommendedName>
</protein>
<gene>
    <name evidence="1" type="primary">minE</name>
    <name type="ordered locus">YpAngola_A2401</name>
</gene>
<reference key="1">
    <citation type="journal article" date="2010" name="J. Bacteriol.">
        <title>Genome sequence of the deep-rooted Yersinia pestis strain Angola reveals new insights into the evolution and pangenome of the plague bacterium.</title>
        <authorList>
            <person name="Eppinger M."/>
            <person name="Worsham P.L."/>
            <person name="Nikolich M.P."/>
            <person name="Riley D.R."/>
            <person name="Sebastian Y."/>
            <person name="Mou S."/>
            <person name="Achtman M."/>
            <person name="Lindler L.E."/>
            <person name="Ravel J."/>
        </authorList>
    </citation>
    <scope>NUCLEOTIDE SEQUENCE [LARGE SCALE GENOMIC DNA]</scope>
    <source>
        <strain>Angola</strain>
    </source>
</reference>
<accession>A9QYV4</accession>